<name>SYS_BURCM</name>
<comment type="function">
    <text evidence="1">Catalyzes the attachment of serine to tRNA(Ser). Is also able to aminoacylate tRNA(Sec) with serine, to form the misacylated tRNA L-seryl-tRNA(Sec), which will be further converted into selenocysteinyl-tRNA(Sec).</text>
</comment>
<comment type="catalytic activity">
    <reaction evidence="1">
        <text>tRNA(Ser) + L-serine + ATP = L-seryl-tRNA(Ser) + AMP + diphosphate + H(+)</text>
        <dbReference type="Rhea" id="RHEA:12292"/>
        <dbReference type="Rhea" id="RHEA-COMP:9669"/>
        <dbReference type="Rhea" id="RHEA-COMP:9703"/>
        <dbReference type="ChEBI" id="CHEBI:15378"/>
        <dbReference type="ChEBI" id="CHEBI:30616"/>
        <dbReference type="ChEBI" id="CHEBI:33019"/>
        <dbReference type="ChEBI" id="CHEBI:33384"/>
        <dbReference type="ChEBI" id="CHEBI:78442"/>
        <dbReference type="ChEBI" id="CHEBI:78533"/>
        <dbReference type="ChEBI" id="CHEBI:456215"/>
        <dbReference type="EC" id="6.1.1.11"/>
    </reaction>
</comment>
<comment type="catalytic activity">
    <reaction evidence="1">
        <text>tRNA(Sec) + L-serine + ATP = L-seryl-tRNA(Sec) + AMP + diphosphate + H(+)</text>
        <dbReference type="Rhea" id="RHEA:42580"/>
        <dbReference type="Rhea" id="RHEA-COMP:9742"/>
        <dbReference type="Rhea" id="RHEA-COMP:10128"/>
        <dbReference type="ChEBI" id="CHEBI:15378"/>
        <dbReference type="ChEBI" id="CHEBI:30616"/>
        <dbReference type="ChEBI" id="CHEBI:33019"/>
        <dbReference type="ChEBI" id="CHEBI:33384"/>
        <dbReference type="ChEBI" id="CHEBI:78442"/>
        <dbReference type="ChEBI" id="CHEBI:78533"/>
        <dbReference type="ChEBI" id="CHEBI:456215"/>
        <dbReference type="EC" id="6.1.1.11"/>
    </reaction>
</comment>
<comment type="pathway">
    <text evidence="1">Aminoacyl-tRNA biosynthesis; selenocysteinyl-tRNA(Sec) biosynthesis; L-seryl-tRNA(Sec) from L-serine and tRNA(Sec): step 1/1.</text>
</comment>
<comment type="subunit">
    <text evidence="1">Homodimer. The tRNA molecule binds across the dimer.</text>
</comment>
<comment type="subcellular location">
    <subcellularLocation>
        <location evidence="1">Cytoplasm</location>
    </subcellularLocation>
</comment>
<comment type="domain">
    <text evidence="1">Consists of two distinct domains, a catalytic core and a N-terminal extension that is involved in tRNA binding.</text>
</comment>
<comment type="similarity">
    <text evidence="1">Belongs to the class-II aminoacyl-tRNA synthetase family. Type-1 seryl-tRNA synthetase subfamily.</text>
</comment>
<gene>
    <name evidence="1" type="primary">serS</name>
    <name type="ordered locus">Bamb_0839</name>
</gene>
<organism>
    <name type="scientific">Burkholderia ambifaria (strain ATCC BAA-244 / DSM 16087 / CCUG 44356 / LMG 19182 / AMMD)</name>
    <name type="common">Burkholderia cepacia (strain AMMD)</name>
    <dbReference type="NCBI Taxonomy" id="339670"/>
    <lineage>
        <taxon>Bacteria</taxon>
        <taxon>Pseudomonadati</taxon>
        <taxon>Pseudomonadota</taxon>
        <taxon>Betaproteobacteria</taxon>
        <taxon>Burkholderiales</taxon>
        <taxon>Burkholderiaceae</taxon>
        <taxon>Burkholderia</taxon>
        <taxon>Burkholderia cepacia complex</taxon>
    </lineage>
</organism>
<keyword id="KW-0030">Aminoacyl-tRNA synthetase</keyword>
<keyword id="KW-0067">ATP-binding</keyword>
<keyword id="KW-0963">Cytoplasm</keyword>
<keyword id="KW-0436">Ligase</keyword>
<keyword id="KW-0547">Nucleotide-binding</keyword>
<keyword id="KW-0648">Protein biosynthesis</keyword>
<accession>Q0BHH5</accession>
<protein>
    <recommendedName>
        <fullName evidence="1">Serine--tRNA ligase</fullName>
        <ecNumber evidence="1">6.1.1.11</ecNumber>
    </recommendedName>
    <alternativeName>
        <fullName evidence="1">Seryl-tRNA synthetase</fullName>
        <shortName evidence="1">SerRS</shortName>
    </alternativeName>
    <alternativeName>
        <fullName evidence="1">Seryl-tRNA(Ser/Sec) synthetase</fullName>
    </alternativeName>
</protein>
<reference key="1">
    <citation type="submission" date="2006-08" db="EMBL/GenBank/DDBJ databases">
        <title>Complete sequence of chromosome 1 of Burkholderia cepacia AMMD.</title>
        <authorList>
            <person name="Copeland A."/>
            <person name="Lucas S."/>
            <person name="Lapidus A."/>
            <person name="Barry K."/>
            <person name="Detter J.C."/>
            <person name="Glavina del Rio T."/>
            <person name="Hammon N."/>
            <person name="Israni S."/>
            <person name="Pitluck S."/>
            <person name="Bruce D."/>
            <person name="Chain P."/>
            <person name="Malfatti S."/>
            <person name="Shin M."/>
            <person name="Vergez L."/>
            <person name="Schmutz J."/>
            <person name="Larimer F."/>
            <person name="Land M."/>
            <person name="Hauser L."/>
            <person name="Kyrpides N."/>
            <person name="Kim E."/>
            <person name="Parke J."/>
            <person name="Coenye T."/>
            <person name="Konstantinidis K."/>
            <person name="Ramette A."/>
            <person name="Tiedje J."/>
            <person name="Richardson P."/>
        </authorList>
    </citation>
    <scope>NUCLEOTIDE SEQUENCE [LARGE SCALE GENOMIC DNA]</scope>
    <source>
        <strain>ATCC BAA-244 / DSM 16087 / CCUG 44356 / LMG 19182 / AMMD</strain>
    </source>
</reference>
<evidence type="ECO:0000255" key="1">
    <source>
        <dbReference type="HAMAP-Rule" id="MF_00176"/>
    </source>
</evidence>
<feature type="chain" id="PRO_1000019628" description="Serine--tRNA ligase">
    <location>
        <begin position="1"/>
        <end position="433"/>
    </location>
</feature>
<feature type="binding site" evidence="1">
    <location>
        <begin position="235"/>
        <end position="237"/>
    </location>
    <ligand>
        <name>L-serine</name>
        <dbReference type="ChEBI" id="CHEBI:33384"/>
    </ligand>
</feature>
<feature type="binding site" evidence="1">
    <location>
        <begin position="266"/>
        <end position="268"/>
    </location>
    <ligand>
        <name>ATP</name>
        <dbReference type="ChEBI" id="CHEBI:30616"/>
    </ligand>
</feature>
<feature type="binding site" evidence="1">
    <location>
        <position position="289"/>
    </location>
    <ligand>
        <name>L-serine</name>
        <dbReference type="ChEBI" id="CHEBI:33384"/>
    </ligand>
</feature>
<feature type="binding site" evidence="1">
    <location>
        <begin position="353"/>
        <end position="356"/>
    </location>
    <ligand>
        <name>ATP</name>
        <dbReference type="ChEBI" id="CHEBI:30616"/>
    </ligand>
</feature>
<feature type="binding site" evidence="1">
    <location>
        <position position="388"/>
    </location>
    <ligand>
        <name>L-serine</name>
        <dbReference type="ChEBI" id="CHEBI:33384"/>
    </ligand>
</feature>
<proteinExistence type="inferred from homology"/>
<sequence>MLDIQLLRKDLDGVAKRLADRGYTLDVAAFSALEAERRAIQTRTEELQARRNSLSKQIGAMKGKGEDTSAVMAEVGGIGDEMKASEAKLGEIQTRLSDLMLGMPNIAHESVPVGKDEADNVEVRRWGTPREFDFAVKDHVDVGTPLGLDFETGAKLAGARFTMLRGSIARLHRALAQFMIDTHTLQHGYTETYTPYIVNPEILYGTGQLPKFADDMFRVEKGGGENTITQYLISTSEISLTNTVRESIVEGSALPIKLTAHSPCFRSEAGSYGRDTRGMIRQHQFDKVEMVQVVAPDASYAALDEMVGHAEAILQKLGLPYRVVALCTGDMGFSAAKTFDLEVWLPAQNTYREISSCSNTEAFQARRMQARFRNAQGKPELVHTLNGSGLAVGRTLVAVLENYQNADGSVTVPEALRPYMGGMERIDAPAQVS</sequence>
<dbReference type="EC" id="6.1.1.11" evidence="1"/>
<dbReference type="EMBL" id="CP000440">
    <property type="protein sequence ID" value="ABI86398.1"/>
    <property type="molecule type" value="Genomic_DNA"/>
</dbReference>
<dbReference type="RefSeq" id="WP_011656207.1">
    <property type="nucleotide sequence ID" value="NC_008390.1"/>
</dbReference>
<dbReference type="SMR" id="Q0BHH5"/>
<dbReference type="GeneID" id="93083754"/>
<dbReference type="KEGG" id="bam:Bamb_0839"/>
<dbReference type="PATRIC" id="fig|339670.21.peg.746"/>
<dbReference type="eggNOG" id="COG0172">
    <property type="taxonomic scope" value="Bacteria"/>
</dbReference>
<dbReference type="UniPathway" id="UPA00906">
    <property type="reaction ID" value="UER00895"/>
</dbReference>
<dbReference type="Proteomes" id="UP000000662">
    <property type="component" value="Chromosome 1"/>
</dbReference>
<dbReference type="GO" id="GO:0005737">
    <property type="term" value="C:cytoplasm"/>
    <property type="evidence" value="ECO:0007669"/>
    <property type="project" value="UniProtKB-SubCell"/>
</dbReference>
<dbReference type="GO" id="GO:0005524">
    <property type="term" value="F:ATP binding"/>
    <property type="evidence" value="ECO:0007669"/>
    <property type="project" value="UniProtKB-UniRule"/>
</dbReference>
<dbReference type="GO" id="GO:0004828">
    <property type="term" value="F:serine-tRNA ligase activity"/>
    <property type="evidence" value="ECO:0007669"/>
    <property type="project" value="UniProtKB-UniRule"/>
</dbReference>
<dbReference type="GO" id="GO:0016260">
    <property type="term" value="P:selenocysteine biosynthetic process"/>
    <property type="evidence" value="ECO:0007669"/>
    <property type="project" value="UniProtKB-UniRule"/>
</dbReference>
<dbReference type="GO" id="GO:0006434">
    <property type="term" value="P:seryl-tRNA aminoacylation"/>
    <property type="evidence" value="ECO:0007669"/>
    <property type="project" value="UniProtKB-UniRule"/>
</dbReference>
<dbReference type="CDD" id="cd00770">
    <property type="entry name" value="SerRS_core"/>
    <property type="match status" value="1"/>
</dbReference>
<dbReference type="Gene3D" id="3.30.930.10">
    <property type="entry name" value="Bira Bifunctional Protein, Domain 2"/>
    <property type="match status" value="1"/>
</dbReference>
<dbReference type="Gene3D" id="1.10.287.40">
    <property type="entry name" value="Serine-tRNA synthetase, tRNA binding domain"/>
    <property type="match status" value="1"/>
</dbReference>
<dbReference type="HAMAP" id="MF_00176">
    <property type="entry name" value="Ser_tRNA_synth_type1"/>
    <property type="match status" value="1"/>
</dbReference>
<dbReference type="InterPro" id="IPR002314">
    <property type="entry name" value="aa-tRNA-synt_IIb"/>
</dbReference>
<dbReference type="InterPro" id="IPR006195">
    <property type="entry name" value="aa-tRNA-synth_II"/>
</dbReference>
<dbReference type="InterPro" id="IPR045864">
    <property type="entry name" value="aa-tRNA-synth_II/BPL/LPL"/>
</dbReference>
<dbReference type="InterPro" id="IPR002317">
    <property type="entry name" value="Ser-tRNA-ligase_type_1"/>
</dbReference>
<dbReference type="InterPro" id="IPR015866">
    <property type="entry name" value="Ser-tRNA-synth_1_N"/>
</dbReference>
<dbReference type="InterPro" id="IPR042103">
    <property type="entry name" value="SerRS_1_N_sf"/>
</dbReference>
<dbReference type="InterPro" id="IPR033729">
    <property type="entry name" value="SerRS_core"/>
</dbReference>
<dbReference type="InterPro" id="IPR010978">
    <property type="entry name" value="tRNA-bd_arm"/>
</dbReference>
<dbReference type="NCBIfam" id="TIGR00414">
    <property type="entry name" value="serS"/>
    <property type="match status" value="1"/>
</dbReference>
<dbReference type="PANTHER" id="PTHR43697:SF1">
    <property type="entry name" value="SERINE--TRNA LIGASE"/>
    <property type="match status" value="1"/>
</dbReference>
<dbReference type="PANTHER" id="PTHR43697">
    <property type="entry name" value="SERYL-TRNA SYNTHETASE"/>
    <property type="match status" value="1"/>
</dbReference>
<dbReference type="Pfam" id="PF02403">
    <property type="entry name" value="Seryl_tRNA_N"/>
    <property type="match status" value="1"/>
</dbReference>
<dbReference type="Pfam" id="PF00587">
    <property type="entry name" value="tRNA-synt_2b"/>
    <property type="match status" value="1"/>
</dbReference>
<dbReference type="PIRSF" id="PIRSF001529">
    <property type="entry name" value="Ser-tRNA-synth_IIa"/>
    <property type="match status" value="1"/>
</dbReference>
<dbReference type="PRINTS" id="PR00981">
    <property type="entry name" value="TRNASYNTHSER"/>
</dbReference>
<dbReference type="SUPFAM" id="SSF55681">
    <property type="entry name" value="Class II aaRS and biotin synthetases"/>
    <property type="match status" value="1"/>
</dbReference>
<dbReference type="SUPFAM" id="SSF46589">
    <property type="entry name" value="tRNA-binding arm"/>
    <property type="match status" value="1"/>
</dbReference>
<dbReference type="PROSITE" id="PS50862">
    <property type="entry name" value="AA_TRNA_LIGASE_II"/>
    <property type="match status" value="1"/>
</dbReference>